<dbReference type="EMBL" id="AE017143">
    <property type="protein sequence ID" value="AAP95644.1"/>
    <property type="molecule type" value="Genomic_DNA"/>
</dbReference>
<dbReference type="RefSeq" id="WP_010944696.1">
    <property type="nucleotide sequence ID" value="NC_002940.2"/>
</dbReference>
<dbReference type="SMR" id="Q7VN51"/>
<dbReference type="STRING" id="233412.HD_0732"/>
<dbReference type="KEGG" id="hdu:HD_0732"/>
<dbReference type="eggNOG" id="COG2003">
    <property type="taxonomic scope" value="Bacteria"/>
</dbReference>
<dbReference type="HOGENOM" id="CLU_073529_0_1_6"/>
<dbReference type="OrthoDB" id="9804482at2"/>
<dbReference type="Proteomes" id="UP000001022">
    <property type="component" value="Chromosome"/>
</dbReference>
<dbReference type="GO" id="GO:0046872">
    <property type="term" value="F:metal ion binding"/>
    <property type="evidence" value="ECO:0007669"/>
    <property type="project" value="UniProtKB-KW"/>
</dbReference>
<dbReference type="GO" id="GO:0008237">
    <property type="term" value="F:metallopeptidase activity"/>
    <property type="evidence" value="ECO:0007669"/>
    <property type="project" value="UniProtKB-KW"/>
</dbReference>
<dbReference type="GO" id="GO:0006508">
    <property type="term" value="P:proteolysis"/>
    <property type="evidence" value="ECO:0007669"/>
    <property type="project" value="UniProtKB-KW"/>
</dbReference>
<dbReference type="CDD" id="cd08071">
    <property type="entry name" value="MPN_DUF2466"/>
    <property type="match status" value="1"/>
</dbReference>
<dbReference type="Gene3D" id="3.40.140.10">
    <property type="entry name" value="Cytidine Deaminase, domain 2"/>
    <property type="match status" value="1"/>
</dbReference>
<dbReference type="InterPro" id="IPR037518">
    <property type="entry name" value="MPN"/>
</dbReference>
<dbReference type="InterPro" id="IPR025657">
    <property type="entry name" value="RadC_JAB"/>
</dbReference>
<dbReference type="InterPro" id="IPR010994">
    <property type="entry name" value="RuvA_2-like"/>
</dbReference>
<dbReference type="InterPro" id="IPR001405">
    <property type="entry name" value="UPF0758"/>
</dbReference>
<dbReference type="InterPro" id="IPR020891">
    <property type="entry name" value="UPF0758_CS"/>
</dbReference>
<dbReference type="InterPro" id="IPR046778">
    <property type="entry name" value="UPF0758_N"/>
</dbReference>
<dbReference type="NCBIfam" id="NF000642">
    <property type="entry name" value="PRK00024.1"/>
    <property type="match status" value="1"/>
</dbReference>
<dbReference type="NCBIfam" id="TIGR00608">
    <property type="entry name" value="radc"/>
    <property type="match status" value="1"/>
</dbReference>
<dbReference type="PANTHER" id="PTHR30471">
    <property type="entry name" value="DNA REPAIR PROTEIN RADC"/>
    <property type="match status" value="1"/>
</dbReference>
<dbReference type="PANTHER" id="PTHR30471:SF3">
    <property type="entry name" value="UPF0758 PROTEIN YEES-RELATED"/>
    <property type="match status" value="1"/>
</dbReference>
<dbReference type="Pfam" id="PF04002">
    <property type="entry name" value="RadC"/>
    <property type="match status" value="1"/>
</dbReference>
<dbReference type="Pfam" id="PF20582">
    <property type="entry name" value="UPF0758_N"/>
    <property type="match status" value="1"/>
</dbReference>
<dbReference type="SUPFAM" id="SSF102712">
    <property type="entry name" value="JAB1/MPN domain"/>
    <property type="match status" value="1"/>
</dbReference>
<dbReference type="SUPFAM" id="SSF47781">
    <property type="entry name" value="RuvA domain 2-like"/>
    <property type="match status" value="1"/>
</dbReference>
<dbReference type="PROSITE" id="PS50249">
    <property type="entry name" value="MPN"/>
    <property type="match status" value="1"/>
</dbReference>
<dbReference type="PROSITE" id="PS01302">
    <property type="entry name" value="UPF0758"/>
    <property type="match status" value="1"/>
</dbReference>
<sequence length="223" mass="25397">MTPSELMPREKLLTYGANALTDQELLAIFLRTGIKGLPVMQLANQVLTTFGSLRALLTADLNAFCQIKGLGQTQFIQLQASKEMTKRYLAQQMQMCETINTPHLAIMYFQTELEFEEREVFMVLFLDNQNRLIKKEKMFYGTINQATVHPREIIKEALKCNAAAIIVAHNHPSGNCTASQADRQLTQKIKAACHLVEVRFVDHIIVGKGSYFSFEEERFHQNN</sequence>
<keyword id="KW-0378">Hydrolase</keyword>
<keyword id="KW-0479">Metal-binding</keyword>
<keyword id="KW-0482">Metalloprotease</keyword>
<keyword id="KW-0645">Protease</keyword>
<keyword id="KW-1185">Reference proteome</keyword>
<keyword id="KW-0862">Zinc</keyword>
<feature type="chain" id="PRO_0000190702" description="UPF0758 protein HD_0732">
    <location>
        <begin position="1"/>
        <end position="223"/>
    </location>
</feature>
<feature type="domain" description="MPN" evidence="1">
    <location>
        <begin position="98"/>
        <end position="220"/>
    </location>
</feature>
<feature type="short sequence motif" description="JAMM motif" evidence="1">
    <location>
        <begin position="169"/>
        <end position="182"/>
    </location>
</feature>
<feature type="binding site" evidence="1">
    <location>
        <position position="169"/>
    </location>
    <ligand>
        <name>Zn(2+)</name>
        <dbReference type="ChEBI" id="CHEBI:29105"/>
        <note>catalytic</note>
    </ligand>
</feature>
<feature type="binding site" evidence="1">
    <location>
        <position position="171"/>
    </location>
    <ligand>
        <name>Zn(2+)</name>
        <dbReference type="ChEBI" id="CHEBI:29105"/>
        <note>catalytic</note>
    </ligand>
</feature>
<feature type="binding site" evidence="1">
    <location>
        <position position="182"/>
    </location>
    <ligand>
        <name>Zn(2+)</name>
        <dbReference type="ChEBI" id="CHEBI:29105"/>
        <note>catalytic</note>
    </ligand>
</feature>
<name>Y732_HAEDU</name>
<protein>
    <recommendedName>
        <fullName>UPF0758 protein HD_0732</fullName>
    </recommendedName>
</protein>
<gene>
    <name type="ordered locus">HD_0732</name>
</gene>
<accession>Q7VN51</accession>
<comment type="similarity">
    <text evidence="2">Belongs to the UPF0758 family.</text>
</comment>
<proteinExistence type="inferred from homology"/>
<organism>
    <name type="scientific">Haemophilus ducreyi (strain 35000HP / ATCC 700724)</name>
    <dbReference type="NCBI Taxonomy" id="233412"/>
    <lineage>
        <taxon>Bacteria</taxon>
        <taxon>Pseudomonadati</taxon>
        <taxon>Pseudomonadota</taxon>
        <taxon>Gammaproteobacteria</taxon>
        <taxon>Pasteurellales</taxon>
        <taxon>Pasteurellaceae</taxon>
        <taxon>Haemophilus</taxon>
    </lineage>
</organism>
<evidence type="ECO:0000255" key="1">
    <source>
        <dbReference type="PROSITE-ProRule" id="PRU01182"/>
    </source>
</evidence>
<evidence type="ECO:0000305" key="2"/>
<reference key="1">
    <citation type="submission" date="2003-06" db="EMBL/GenBank/DDBJ databases">
        <title>The complete genome sequence of Haemophilus ducreyi.</title>
        <authorList>
            <person name="Munson R.S. Jr."/>
            <person name="Ray W.C."/>
            <person name="Mahairas G."/>
            <person name="Sabo P."/>
            <person name="Mungur R."/>
            <person name="Johnson L."/>
            <person name="Nguyen D."/>
            <person name="Wang J."/>
            <person name="Forst C."/>
            <person name="Hood L."/>
        </authorList>
    </citation>
    <scope>NUCLEOTIDE SEQUENCE [LARGE SCALE GENOMIC DNA]</scope>
    <source>
        <strain>35000HP / ATCC 700724</strain>
    </source>
</reference>